<name>TYOBP_MOUSE</name>
<proteinExistence type="evidence at protein level"/>
<gene>
    <name evidence="33" type="primary">Tyrobp</name>
    <name evidence="30" type="synonym">Dap12</name>
    <name evidence="31" type="synonym">Karap</name>
</gene>
<feature type="signal peptide" evidence="2">
    <location>
        <begin position="1"/>
        <end position="21"/>
    </location>
</feature>
<feature type="chain" id="PRO_0000022605" description="TYRO protein tyrosine kinase-binding protein">
    <location>
        <begin position="22"/>
        <end position="114"/>
    </location>
</feature>
<feature type="topological domain" description="Extracellular" evidence="1">
    <location>
        <begin position="22"/>
        <end position="42"/>
    </location>
</feature>
<feature type="transmembrane region" description="Helical" evidence="1">
    <location>
        <begin position="43"/>
        <end position="63"/>
    </location>
</feature>
<feature type="topological domain" description="Cytoplasmic" evidence="1">
    <location>
        <begin position="64"/>
        <end position="114"/>
    </location>
</feature>
<feature type="domain" description="ITAM">
    <location>
        <begin position="81"/>
        <end position="109"/>
    </location>
</feature>
<feature type="region of interest" description="Disordered" evidence="3">
    <location>
        <begin position="74"/>
        <end position="107"/>
    </location>
</feature>
<feature type="binding site" evidence="1">
    <location>
        <position position="52"/>
    </location>
    <ligand>
        <name>Ca(2+)</name>
        <dbReference type="ChEBI" id="CHEBI:29108"/>
        <note>ligand shared between two neighboring subunits in homooligomer</note>
    </ligand>
</feature>
<feature type="site" description="Important for interaction with transmembrane receptors" evidence="1">
    <location>
        <position position="56"/>
    </location>
</feature>
<feature type="modified residue" description="Phosphotyrosine" evidence="20 24 34">
    <location>
        <position position="92"/>
    </location>
</feature>
<feature type="modified residue" description="Phosphotyrosine" evidence="20 24 34">
    <location>
        <position position="103"/>
    </location>
</feature>
<feature type="disulfide bond" description="Interchain" evidence="1">
    <location>
        <position position="37"/>
    </location>
</feature>
<feature type="mutagenesis site" description="Failure to rescue cytoskeletal defects when introduced into TYROBP-deficient cells." evidence="20">
    <original>D</original>
    <variation>A</variation>
    <location>
        <position position="52"/>
    </location>
</feature>
<feature type="mutagenesis site" description="Abolishes phosphorylation and ability to regulate cytoskeletal organization; when associated with F-103." evidence="20 24">
    <original>Y</original>
    <variation>F</variation>
    <location>
        <position position="92"/>
    </location>
</feature>
<feature type="mutagenesis site" description="Abolishes phosphorylation and ability to regulate cytoskeletal organization; when associated with F-92." evidence="20 24">
    <original>Y</original>
    <variation>F</variation>
    <location>
        <position position="103"/>
    </location>
</feature>
<feature type="sequence conflict" description="In Ref. 2; AAC95529." evidence="32" ref="2">
    <original>G</original>
    <variation>E</variation>
    <location>
        <position position="20"/>
    </location>
</feature>
<keyword id="KW-0106">Calcium</keyword>
<keyword id="KW-1003">Cell membrane</keyword>
<keyword id="KW-1015">Disulfide bond</keyword>
<keyword id="KW-0391">Immunity</keyword>
<keyword id="KW-0472">Membrane</keyword>
<keyword id="KW-0479">Metal-binding</keyword>
<keyword id="KW-0597">Phosphoprotein</keyword>
<keyword id="KW-1185">Reference proteome</keyword>
<keyword id="KW-0732">Signal</keyword>
<keyword id="KW-0812">Transmembrane</keyword>
<keyword id="KW-1133">Transmembrane helix</keyword>
<sequence>MGALEPSWCLLFLPVLLTVGGLSPVQAQSDTFPRCDCSSVSPGVLAGIVLGDLVLTLLIALAVYSLGRLVSRGQGTAEGTRKQHIAETESPYQELQGQRPEVYSDLNTQRQYYR</sequence>
<dbReference type="EMBL" id="AF024637">
    <property type="protein sequence ID" value="AAD09438.1"/>
    <property type="molecule type" value="mRNA"/>
</dbReference>
<dbReference type="EMBL" id="AF077829">
    <property type="protein sequence ID" value="AAC95529.1"/>
    <property type="molecule type" value="mRNA"/>
</dbReference>
<dbReference type="EMBL" id="BC056450">
    <property type="protein sequence ID" value="AAH56450.1"/>
    <property type="molecule type" value="mRNA"/>
</dbReference>
<dbReference type="CCDS" id="CCDS21089.1"/>
<dbReference type="RefSeq" id="NP_035792.1">
    <property type="nucleotide sequence ID" value="NM_011662.3"/>
</dbReference>
<dbReference type="SMR" id="O54885"/>
<dbReference type="BioGRID" id="204396">
    <property type="interactions" value="7"/>
</dbReference>
<dbReference type="CORUM" id="O54885"/>
<dbReference type="DIP" id="DIP-29746N"/>
<dbReference type="FunCoup" id="O54885">
    <property type="interactions" value="467"/>
</dbReference>
<dbReference type="IntAct" id="O54885">
    <property type="interactions" value="4"/>
</dbReference>
<dbReference type="STRING" id="10090.ENSMUSP00000032800"/>
<dbReference type="iPTMnet" id="O54885"/>
<dbReference type="PhosphoSitePlus" id="O54885"/>
<dbReference type="PaxDb" id="10090-ENSMUSP00000032800"/>
<dbReference type="PeptideAtlas" id="O54885"/>
<dbReference type="ProteomicsDB" id="298443"/>
<dbReference type="Antibodypedia" id="4010">
    <property type="antibodies" value="290 antibodies from 38 providers"/>
</dbReference>
<dbReference type="DNASU" id="22177"/>
<dbReference type="Ensembl" id="ENSMUST00000032800.10">
    <property type="protein sequence ID" value="ENSMUSP00000032800.10"/>
    <property type="gene ID" value="ENSMUSG00000030579.11"/>
</dbReference>
<dbReference type="GeneID" id="22177"/>
<dbReference type="KEGG" id="mmu:22177"/>
<dbReference type="UCSC" id="uc009gef.1">
    <property type="organism name" value="mouse"/>
</dbReference>
<dbReference type="AGR" id="MGI:1277211"/>
<dbReference type="CTD" id="7305"/>
<dbReference type="MGI" id="MGI:1277211">
    <property type="gene designation" value="Tyrobp"/>
</dbReference>
<dbReference type="VEuPathDB" id="HostDB:ENSMUSG00000030579"/>
<dbReference type="eggNOG" id="ENOG502SCVI">
    <property type="taxonomic scope" value="Eukaryota"/>
</dbReference>
<dbReference type="GeneTree" id="ENSGT00390000016786"/>
<dbReference type="HOGENOM" id="CLU_141718_0_0_1"/>
<dbReference type="InParanoid" id="O54885"/>
<dbReference type="OMA" id="QRQPYYK"/>
<dbReference type="OrthoDB" id="63183at9989"/>
<dbReference type="PhylomeDB" id="O54885"/>
<dbReference type="TreeFam" id="TF336898"/>
<dbReference type="Reactome" id="R-MMU-198933">
    <property type="pathway name" value="Immunoregulatory interactions between a Lymphoid and a non-Lymphoid cell"/>
</dbReference>
<dbReference type="Reactome" id="R-MMU-2172127">
    <property type="pathway name" value="DAP12 interactions"/>
</dbReference>
<dbReference type="Reactome" id="R-MMU-2424491">
    <property type="pathway name" value="DAP12 signaling"/>
</dbReference>
<dbReference type="Reactome" id="R-MMU-391160">
    <property type="pathway name" value="Signal regulatory protein family interactions"/>
</dbReference>
<dbReference type="Reactome" id="R-MMU-416700">
    <property type="pathway name" value="Other semaphorin interactions"/>
</dbReference>
<dbReference type="Reactome" id="R-MMU-6798695">
    <property type="pathway name" value="Neutrophil degranulation"/>
</dbReference>
<dbReference type="BioGRID-ORCS" id="22177">
    <property type="hits" value="2 hits in 78 CRISPR screens"/>
</dbReference>
<dbReference type="ChiTaRS" id="Tyrobp">
    <property type="organism name" value="mouse"/>
</dbReference>
<dbReference type="PRO" id="PR:O54885"/>
<dbReference type="Proteomes" id="UP000000589">
    <property type="component" value="Chromosome 7"/>
</dbReference>
<dbReference type="RNAct" id="O54885">
    <property type="molecule type" value="protein"/>
</dbReference>
<dbReference type="Bgee" id="ENSMUSG00000030579">
    <property type="expression patterns" value="Expressed in granulocyte and 215 other cell types or tissues"/>
</dbReference>
<dbReference type="ExpressionAtlas" id="O54885">
    <property type="expression patterns" value="baseline and differential"/>
</dbReference>
<dbReference type="GO" id="GO:0009986">
    <property type="term" value="C:cell surface"/>
    <property type="evidence" value="ECO:0000314"/>
    <property type="project" value="UniProtKB"/>
</dbReference>
<dbReference type="GO" id="GO:0005886">
    <property type="term" value="C:plasma membrane"/>
    <property type="evidence" value="ECO:0000250"/>
    <property type="project" value="UniProtKB"/>
</dbReference>
<dbReference type="GO" id="GO:0046872">
    <property type="term" value="F:metal ion binding"/>
    <property type="evidence" value="ECO:0007669"/>
    <property type="project" value="UniProtKB-KW"/>
</dbReference>
<dbReference type="GO" id="GO:0042803">
    <property type="term" value="F:protein homodimerization activity"/>
    <property type="evidence" value="ECO:0000250"/>
    <property type="project" value="UniProtKB"/>
</dbReference>
<dbReference type="GO" id="GO:0030674">
    <property type="term" value="F:protein-macromolecule adaptor activity"/>
    <property type="evidence" value="ECO:0007669"/>
    <property type="project" value="Ensembl"/>
</dbReference>
<dbReference type="GO" id="GO:0005102">
    <property type="term" value="F:signaling receptor binding"/>
    <property type="evidence" value="ECO:0000353"/>
    <property type="project" value="UniProtKB"/>
</dbReference>
<dbReference type="GO" id="GO:0030036">
    <property type="term" value="P:actin cytoskeleton organization"/>
    <property type="evidence" value="ECO:0000315"/>
    <property type="project" value="UniProtKB"/>
</dbReference>
<dbReference type="GO" id="GO:0097242">
    <property type="term" value="P:amyloid-beta clearance"/>
    <property type="evidence" value="ECO:0007669"/>
    <property type="project" value="Ensembl"/>
</dbReference>
<dbReference type="GO" id="GO:0043277">
    <property type="term" value="P:apoptotic cell clearance"/>
    <property type="evidence" value="ECO:0000315"/>
    <property type="project" value="UniProtKB"/>
</dbReference>
<dbReference type="GO" id="GO:1904646">
    <property type="term" value="P:cellular response to amyloid-beta"/>
    <property type="evidence" value="ECO:0007669"/>
    <property type="project" value="Ensembl"/>
</dbReference>
<dbReference type="GO" id="GO:0030900">
    <property type="term" value="P:forebrain development"/>
    <property type="evidence" value="ECO:0000314"/>
    <property type="project" value="ARUK-UCL"/>
</dbReference>
<dbReference type="GO" id="GO:0007229">
    <property type="term" value="P:integrin-mediated signaling pathway"/>
    <property type="evidence" value="ECO:0000315"/>
    <property type="project" value="UniProtKB"/>
</dbReference>
<dbReference type="GO" id="GO:0002281">
    <property type="term" value="P:macrophage activation involved in immune response"/>
    <property type="evidence" value="ECO:0000315"/>
    <property type="project" value="UniProtKB"/>
</dbReference>
<dbReference type="GO" id="GO:0002282">
    <property type="term" value="P:microglial cell activation involved in immune response"/>
    <property type="evidence" value="ECO:0000315"/>
    <property type="project" value="UniProtKB"/>
</dbReference>
<dbReference type="GO" id="GO:0002228">
    <property type="term" value="P:natural killer cell mediated immunity"/>
    <property type="evidence" value="ECO:0007669"/>
    <property type="project" value="Ensembl"/>
</dbReference>
<dbReference type="GO" id="GO:0030889">
    <property type="term" value="P:negative regulation of B cell proliferation"/>
    <property type="evidence" value="ECO:0000315"/>
    <property type="project" value="UniProtKB"/>
</dbReference>
<dbReference type="GO" id="GO:0032693">
    <property type="term" value="P:negative regulation of interleukin-10 production"/>
    <property type="evidence" value="ECO:0000315"/>
    <property type="project" value="ARUK-UCL"/>
</dbReference>
<dbReference type="GO" id="GO:1900272">
    <property type="term" value="P:negative regulation of long-term synaptic potentiation"/>
    <property type="evidence" value="ECO:0000315"/>
    <property type="project" value="ARUK-UCL"/>
</dbReference>
<dbReference type="GO" id="GO:0032911">
    <property type="term" value="P:negative regulation of transforming growth factor beta1 production"/>
    <property type="evidence" value="ECO:0000315"/>
    <property type="project" value="ARUK-UCL"/>
</dbReference>
<dbReference type="GO" id="GO:0032480">
    <property type="term" value="P:negative regulation of type I interferon production"/>
    <property type="evidence" value="ECO:0007669"/>
    <property type="project" value="Ensembl"/>
</dbReference>
<dbReference type="GO" id="GO:0002283">
    <property type="term" value="P:neutrophil activation involved in immune response"/>
    <property type="evidence" value="ECO:0000315"/>
    <property type="project" value="UniProtKB"/>
</dbReference>
<dbReference type="GO" id="GO:0030316">
    <property type="term" value="P:osteoclast differentiation"/>
    <property type="evidence" value="ECO:0000314"/>
    <property type="project" value="MGI"/>
</dbReference>
<dbReference type="GO" id="GO:0010628">
    <property type="term" value="P:positive regulation of gene expression"/>
    <property type="evidence" value="ECO:0000315"/>
    <property type="project" value="ARUK-UCL"/>
</dbReference>
<dbReference type="GO" id="GO:0032731">
    <property type="term" value="P:positive regulation of interleukin-1 beta production"/>
    <property type="evidence" value="ECO:0000315"/>
    <property type="project" value="ARUK-UCL"/>
</dbReference>
<dbReference type="GO" id="GO:0032755">
    <property type="term" value="P:positive regulation of interleukin-6 production"/>
    <property type="evidence" value="ECO:0000315"/>
    <property type="project" value="ARUK-UCL"/>
</dbReference>
<dbReference type="GO" id="GO:0034241">
    <property type="term" value="P:positive regulation of macrophage fusion"/>
    <property type="evidence" value="ECO:0000315"/>
    <property type="project" value="UniProtKB"/>
</dbReference>
<dbReference type="GO" id="GO:1904151">
    <property type="term" value="P:positive regulation of microglial cell mediated cytotoxicity"/>
    <property type="evidence" value="ECO:0000315"/>
    <property type="project" value="UniProtKB"/>
</dbReference>
<dbReference type="GO" id="GO:0032816">
    <property type="term" value="P:positive regulation of natural killer cell activation"/>
    <property type="evidence" value="ECO:0000314"/>
    <property type="project" value="UniProtKB"/>
</dbReference>
<dbReference type="GO" id="GO:2001206">
    <property type="term" value="P:positive regulation of osteoclast development"/>
    <property type="evidence" value="ECO:0000315"/>
    <property type="project" value="UniProtKB"/>
</dbReference>
<dbReference type="GO" id="GO:2000010">
    <property type="term" value="P:positive regulation of protein localization to cell surface"/>
    <property type="evidence" value="ECO:0007669"/>
    <property type="project" value="Ensembl"/>
</dbReference>
<dbReference type="GO" id="GO:1902685">
    <property type="term" value="P:positive regulation of receptor localization to synapse"/>
    <property type="evidence" value="ECO:0000315"/>
    <property type="project" value="ARUK-UCL"/>
</dbReference>
<dbReference type="GO" id="GO:0032930">
    <property type="term" value="P:positive regulation of superoxide anion generation"/>
    <property type="evidence" value="ECO:0000314"/>
    <property type="project" value="ARUK-UCL"/>
</dbReference>
<dbReference type="GO" id="GO:0032760">
    <property type="term" value="P:positive regulation of tumor necrosis factor production"/>
    <property type="evidence" value="ECO:0000315"/>
    <property type="project" value="ARUK-UCL"/>
</dbReference>
<dbReference type="GO" id="GO:0050821">
    <property type="term" value="P:protein stabilization"/>
    <property type="evidence" value="ECO:0000250"/>
    <property type="project" value="UniProtKB"/>
</dbReference>
<dbReference type="GO" id="GO:2001204">
    <property type="term" value="P:regulation of osteoclast development"/>
    <property type="evidence" value="ECO:0000316"/>
    <property type="project" value="MGI"/>
</dbReference>
<dbReference type="GO" id="GO:0048678">
    <property type="term" value="P:response to axon injury"/>
    <property type="evidence" value="ECO:0000315"/>
    <property type="project" value="ARUK-UCL"/>
</dbReference>
<dbReference type="GO" id="GO:0071526">
    <property type="term" value="P:semaphorin-plexin signaling pathway"/>
    <property type="evidence" value="ECO:0000314"/>
    <property type="project" value="UniProtKB"/>
</dbReference>
<dbReference type="GO" id="GO:0002223">
    <property type="term" value="P:stimulatory C-type lectin receptor signaling pathway"/>
    <property type="evidence" value="ECO:0000250"/>
    <property type="project" value="UniProtKB"/>
</dbReference>
<dbReference type="GO" id="GO:0002222">
    <property type="term" value="P:stimulatory killer cell immunoglobulin-like receptor signaling pathway"/>
    <property type="evidence" value="ECO:0000250"/>
    <property type="project" value="UniProtKB"/>
</dbReference>
<dbReference type="GO" id="GO:0002291">
    <property type="term" value="P:T cell activation via T cell receptor contact with antigen bound to MHC molecule on antigen presenting cell"/>
    <property type="evidence" value="ECO:0000314"/>
    <property type="project" value="UniProtKB"/>
</dbReference>
<dbReference type="FunFam" id="1.10.287.770:FF:000004">
    <property type="entry name" value="TYRO protein tyrosine kinase-binding protein"/>
    <property type="match status" value="1"/>
</dbReference>
<dbReference type="Gene3D" id="1.10.287.770">
    <property type="entry name" value="YojJ-like"/>
    <property type="match status" value="1"/>
</dbReference>
<dbReference type="InterPro" id="IPR026200">
    <property type="entry name" value="Tyrobp"/>
</dbReference>
<dbReference type="PANTHER" id="PTHR17554">
    <property type="entry name" value="TYRO PROTEIN TYROSINE KINASE-BINDING PROTEIN"/>
    <property type="match status" value="1"/>
</dbReference>
<dbReference type="PANTHER" id="PTHR17554:SF2">
    <property type="entry name" value="TYRO PROTEIN TYROSINE KINASE-BINDING PROTEIN"/>
    <property type="match status" value="1"/>
</dbReference>
<protein>
    <recommendedName>
        <fullName evidence="33">TYRO protein tyrosine kinase-binding protein</fullName>
    </recommendedName>
    <alternativeName>
        <fullName evidence="30">DNAX-activation protein 12</fullName>
    </alternativeName>
    <alternativeName>
        <fullName evidence="31">Killer-activating receptor-associated protein</fullName>
        <shortName evidence="31">KAR-associated protein</shortName>
    </alternativeName>
</protein>
<evidence type="ECO:0000250" key="1">
    <source>
        <dbReference type="UniProtKB" id="O43914"/>
    </source>
</evidence>
<evidence type="ECO:0000255" key="2"/>
<evidence type="ECO:0000256" key="3">
    <source>
        <dbReference type="SAM" id="MobiDB-lite"/>
    </source>
</evidence>
<evidence type="ECO:0000269" key="4">
    <source>
    </source>
</evidence>
<evidence type="ECO:0000269" key="5">
    <source>
    </source>
</evidence>
<evidence type="ECO:0000269" key="6">
    <source>
    </source>
</evidence>
<evidence type="ECO:0000269" key="7">
    <source>
    </source>
</evidence>
<evidence type="ECO:0000269" key="8">
    <source>
    </source>
</evidence>
<evidence type="ECO:0000269" key="9">
    <source>
    </source>
</evidence>
<evidence type="ECO:0000269" key="10">
    <source>
    </source>
</evidence>
<evidence type="ECO:0000269" key="11">
    <source>
    </source>
</evidence>
<evidence type="ECO:0000269" key="12">
    <source>
    </source>
</evidence>
<evidence type="ECO:0000269" key="13">
    <source>
    </source>
</evidence>
<evidence type="ECO:0000269" key="14">
    <source>
    </source>
</evidence>
<evidence type="ECO:0000269" key="15">
    <source>
    </source>
</evidence>
<evidence type="ECO:0000269" key="16">
    <source>
    </source>
</evidence>
<evidence type="ECO:0000269" key="17">
    <source>
    </source>
</evidence>
<evidence type="ECO:0000269" key="18">
    <source>
    </source>
</evidence>
<evidence type="ECO:0000269" key="19">
    <source>
    </source>
</evidence>
<evidence type="ECO:0000269" key="20">
    <source>
    </source>
</evidence>
<evidence type="ECO:0000269" key="21">
    <source>
    </source>
</evidence>
<evidence type="ECO:0000269" key="22">
    <source>
    </source>
</evidence>
<evidence type="ECO:0000269" key="23">
    <source>
    </source>
</evidence>
<evidence type="ECO:0000269" key="24">
    <source>
    </source>
</evidence>
<evidence type="ECO:0000269" key="25">
    <source>
    </source>
</evidence>
<evidence type="ECO:0000269" key="26">
    <source>
    </source>
</evidence>
<evidence type="ECO:0000269" key="27">
    <source>
    </source>
</evidence>
<evidence type="ECO:0000269" key="28">
    <source>
    </source>
</evidence>
<evidence type="ECO:0000269" key="29">
    <source>
    </source>
</evidence>
<evidence type="ECO:0000303" key="30">
    <source>
    </source>
</evidence>
<evidence type="ECO:0000303" key="31">
    <source>
    </source>
</evidence>
<evidence type="ECO:0000305" key="32"/>
<evidence type="ECO:0000312" key="33">
    <source>
        <dbReference type="MGI" id="MGI:1277211"/>
    </source>
</evidence>
<evidence type="ECO:0007744" key="34">
    <source>
    </source>
</evidence>
<reference key="1">
    <citation type="journal article" date="1998" name="Nature">
        <title>Immunoreceptor DAP12 bearing a tyrosine-based activation motif is involved in activating NK cells.</title>
        <authorList>
            <person name="Lanier L.L."/>
            <person name="Corliss B.C."/>
            <person name="Wu J."/>
            <person name="Leong C."/>
            <person name="Phillips J.H."/>
        </authorList>
    </citation>
    <scope>NUCLEOTIDE SEQUENCE [MRNA]</scope>
    <scope>PHOSPHORYLATION</scope>
    <source>
        <strain>C57BL/6J</strain>
    </source>
</reference>
<reference key="2">
    <citation type="journal article" date="1998" name="J. Biol. Chem.">
        <title>Gene structure, expression pattern, and biological activity of mouse killer cell activating receptor-associated protein (KARAP)/DAP-12.</title>
        <authorList>
            <person name="Tomasello E."/>
            <person name="Olcese L."/>
            <person name="Vely F."/>
            <person name="Geourgeon C."/>
            <person name="Blery M."/>
            <person name="Moqrich A."/>
            <person name="Gautheret D."/>
            <person name="Djabali M."/>
            <person name="Mattei M.-G."/>
            <person name="Vivier E."/>
        </authorList>
    </citation>
    <scope>NUCLEOTIDE SEQUENCE [MRNA]</scope>
    <scope>PHOSPHORYLATION</scope>
</reference>
<reference key="3">
    <citation type="journal article" date="2004" name="Genome Res.">
        <title>The status, quality, and expansion of the NIH full-length cDNA project: the Mammalian Gene Collection (MGC).</title>
        <authorList>
            <consortium name="The MGC Project Team"/>
        </authorList>
    </citation>
    <scope>NUCLEOTIDE SEQUENCE [LARGE SCALE MRNA]</scope>
    <source>
        <strain>C57BL/6J</strain>
        <tissue>Brain</tissue>
    </source>
</reference>
<reference key="4">
    <citation type="journal article" date="1998" name="J. Immunol.">
        <title>Ly-49D and Ly-49H associate with mouse DAP12 and form activating receptors.</title>
        <authorList>
            <person name="Smith K.M."/>
            <person name="Wu J."/>
            <person name="Bakker A.B."/>
            <person name="Phillips J.H."/>
            <person name="Lanier L.L."/>
        </authorList>
    </citation>
    <scope>FUNCTION</scope>
    <scope>INTERACTION WITH KLRA4 AND KLRA8</scope>
    <scope>SUBCELLULAR LOCATION</scope>
</reference>
<reference key="5">
    <citation type="journal article" date="1999" name="Proc. Natl. Acad. Sci. U.S.A.">
        <title>Myeloid DAP12-associating lectin (MDL)-1 is a cell surface receptor involved in the activation of myeloid cells.</title>
        <authorList>
            <person name="Bakker A.B.H."/>
            <person name="Baker E."/>
            <person name="Sutherland G.R."/>
            <person name="Phillips J.H."/>
            <person name="Lanier L.L."/>
        </authorList>
    </citation>
    <scope>INTERACTION WITH CLECSF5</scope>
</reference>
<reference key="6">
    <citation type="journal article" date="2002" name="Eur. J. Immunol.">
        <title>Characterization of TREM-3, an activating receptor on mouse macrophages: definition of a family of single Ig domain receptors on mouse chromosome 17.</title>
        <authorList>
            <person name="Chung D.H."/>
            <person name="Seaman W.E."/>
            <person name="Daws M.R."/>
        </authorList>
    </citation>
    <scope>INTERACTION WITH TREM3</scope>
    <scope>PHOSPHORYLATION</scope>
</reference>
<reference key="7">
    <citation type="journal article" date="2002" name="Nat. Immunol.">
        <title>Selective associations with signaling proteins determine stimulatory versus costimulatory activity of NKG2D.</title>
        <authorList>
            <person name="Diefenbach A."/>
            <person name="Tomasello E."/>
            <person name="Lucas M."/>
            <person name="Jamieson A.M."/>
            <person name="Hsia J.K."/>
            <person name="Vivier E."/>
            <person name="Raulet D.H."/>
        </authorList>
    </citation>
    <scope>INTERACTION WITH KLRK1</scope>
    <scope>PHOSPHORYLATION</scope>
</reference>
<reference key="8">
    <citation type="journal article" date="2002" name="Nat. Immunol.">
        <title>NKG2D recruits two distinct adapters to trigger NK cell activation and costimulation.</title>
        <authorList>
            <person name="Gilfillan S."/>
            <person name="Ho E.L."/>
            <person name="Cella M."/>
            <person name="Yokoyama W.M."/>
            <person name="Colonna M."/>
        </authorList>
    </citation>
    <scope>INTERACTION WITH KLRK1</scope>
</reference>
<reference key="9">
    <citation type="journal article" date="2003" name="Biochem. Biophys. Res. Commun.">
        <title>Identification and characterization of a new pair of immunoglobulin-like receptors LMIR1 and 2 derived from murine bone marrow-derived mast cells.</title>
        <authorList>
            <person name="Kumagai H."/>
            <person name="Oki T."/>
            <person name="Tamitsu K."/>
            <person name="Feng S.-Z."/>
            <person name="Ono M."/>
            <person name="Nakajima H."/>
            <person name="Bao Y.-C."/>
            <person name="Kawakami Y."/>
            <person name="Nagayoshi K."/>
            <person name="Copeland N.G."/>
            <person name="Gilbert D.J."/>
            <person name="Jenkins N.A."/>
            <person name="Kawakami T."/>
            <person name="Kitamura T."/>
        </authorList>
    </citation>
    <scope>INTERACTION WITH CD300C2</scope>
</reference>
<reference key="10">
    <citation type="journal article" date="2003" name="J. Clin. Invest.">
        <title>Osteopetrosis and thalamic hypomyelinosis with synaptic degeneration in DAP12-deficient mice.</title>
        <authorList>
            <person name="Kaifu T."/>
            <person name="Nakahara J."/>
            <person name="Inui M."/>
            <person name="Mishima K."/>
            <person name="Momiyama T."/>
            <person name="Kaji M."/>
            <person name="Sugahara A."/>
            <person name="Koito H."/>
            <person name="Ujike-Asai A."/>
            <person name="Nakamura A."/>
            <person name="Kanazawa K."/>
            <person name="Tan-Takeuchi K."/>
            <person name="Iwasaki K."/>
            <person name="Yokoyama W.M."/>
            <person name="Kudo A."/>
            <person name="Fujiwara M."/>
            <person name="Asou H."/>
            <person name="Takai T."/>
        </authorList>
    </citation>
    <scope>FUNCTION</scope>
    <scope>TISSUE SPECIFICITY</scope>
    <scope>DISRUPTION PHENOTYPE</scope>
</reference>
<reference key="11">
    <citation type="journal article" date="2003" name="J. Exp. Med.">
        <title>Paired activating and inhibitory immunoglobulin-like receptors, MAIR-I and MAIR-II, regulate mast cell and macrophage activation.</title>
        <authorList>
            <person name="Yotsumoto K."/>
            <person name="Okoshi Y."/>
            <person name="Shibuya K."/>
            <person name="Yamazaki S."/>
            <person name="Tahara-Hanaoka S."/>
            <person name="Honda S."/>
            <person name="Osawa M."/>
            <person name="Kuroiwa A."/>
            <person name="Matsuda Y."/>
            <person name="Tenen D.G."/>
            <person name="Iwama A."/>
            <person name="Nakauchi H."/>
            <person name="Shibuya A."/>
        </authorList>
    </citation>
    <scope>INTERACTION WITH CD300C2</scope>
</reference>
<reference key="12">
    <citation type="journal article" date="2004" name="J. Biol. Chem.">
        <title>CD200 receptor family members represent novel DAP12-associated activating receptors on basophils and mast cells.</title>
        <authorList>
            <person name="Voehringer D."/>
            <person name="Rosen D.B."/>
            <person name="Lanier L.L."/>
            <person name="Locksley R.M."/>
        </authorList>
    </citation>
    <scope>FUNCTION</scope>
</reference>
<reference key="13">
    <citation type="journal article" date="2004" name="J. Bone Miner. Res.">
        <title>The signaling adapter protein DAP12 regulates multinucleation during osteoclast development.</title>
        <authorList>
            <person name="Humphrey M.B."/>
            <person name="Ogasawara K."/>
            <person name="Yao W."/>
            <person name="Spusta S.C."/>
            <person name="Daws M.R."/>
            <person name="Lane N.E."/>
            <person name="Lanier L.L."/>
            <person name="Nakamura M.C."/>
        </authorList>
    </citation>
    <scope>FUNCTION</scope>
    <scope>TISSUE SPECIFICITY</scope>
    <scope>DISRUPTION PHENOTYPE</scope>
</reference>
<reference key="14">
    <citation type="journal article" date="2004" name="J. Immunol.">
        <title>A Structural basis for the association of DAP12 with mouse, but not human, NKG2D.</title>
        <authorList>
            <person name="Rosen D.B."/>
            <person name="Araki M."/>
            <person name="Hamerman J.A."/>
            <person name="Chen T."/>
            <person name="Yamamura T."/>
            <person name="Lanier L.L."/>
        </authorList>
    </citation>
    <scope>INTERACTION WITH KLRK1</scope>
</reference>
<reference key="15">
    <citation type="journal article" date="2006" name="Nat. Immunol.">
        <title>Integrin signaling in neutrophils and macrophages uses adapters containing immunoreceptor tyrosine-based activation motifs.</title>
        <authorList>
            <person name="Mocsai A."/>
            <person name="Abram C.L."/>
            <person name="Jakus Z."/>
            <person name="Hu Y."/>
            <person name="Lanier L.L."/>
            <person name="Lowell C.A."/>
        </authorList>
    </citation>
    <scope>FUNCTION IN INTEGRIN-MEDIATED NEUTROPHIL ACTIVATION</scope>
    <scope>INTERACTION WITH SYK</scope>
    <scope>PHOSPHORYLATION</scope>
</reference>
<reference key="16">
    <citation type="journal article" date="2005" name="J. Exp. Med.">
        <title>Clearance of apoptotic neurons without inflammation by microglial triggering receptor expressed on myeloid cells-2.</title>
        <authorList>
            <person name="Takahashi K."/>
            <person name="Rochford C.D."/>
            <person name="Neumann H."/>
        </authorList>
    </citation>
    <scope>FUNCTION</scope>
    <scope>PHOSPHORYLATION</scope>
</reference>
<reference key="17">
    <citation type="journal article" date="2006" name="Nat. Cell Biol.">
        <title>Plexin-A1 and its interaction with DAP12 in immune responses and bone homeostasis.</title>
        <authorList>
            <person name="Takegahara N."/>
            <person name="Takamatsu H."/>
            <person name="Toyofuku T."/>
            <person name="Tsujimura T."/>
            <person name="Okuno T."/>
            <person name="Yukawa K."/>
            <person name="Mizui M."/>
            <person name="Yamamoto M."/>
            <person name="Prasad D.V."/>
            <person name="Suzuki K."/>
            <person name="Ishii M."/>
            <person name="Terai K."/>
            <person name="Moriya M."/>
            <person name="Nakatsuji Y."/>
            <person name="Sakoda S."/>
            <person name="Sato S."/>
            <person name="Akira S."/>
            <person name="Takeda K."/>
            <person name="Inui M."/>
            <person name="Takai T."/>
            <person name="Ikawa M."/>
            <person name="Okabe M."/>
            <person name="Kumanogoh A."/>
            <person name="Kikutani H."/>
        </authorList>
    </citation>
    <scope>FUNCTION</scope>
    <scope>INTERACTION WITH TREM2</scope>
</reference>
<reference key="18">
    <citation type="journal article" date="2007" name="J. Immunol.">
        <title>Dual assemblies of an activating immune receptor, MAIR-II, with ITAM-bearing adapters DAP12 and FcRgamma chain on peritoneal macrophages.</title>
        <authorList>
            <person name="Nakahashi C."/>
            <person name="Tahara-Hanaoka S."/>
            <person name="Totsuka N."/>
            <person name="Okoshi Y."/>
            <person name="Takai T."/>
            <person name="Ohkohchi N."/>
            <person name="Honda S."/>
            <person name="Shibuya K."/>
            <person name="Shibuya A."/>
        </authorList>
    </citation>
    <scope>INTERACTION WITH CD300C2</scope>
</reference>
<reference key="19">
    <citation type="journal article" date="2007" name="J. Immunol.">
        <title>Quantitative time-resolved phosphoproteomic analysis of mast cell signaling.</title>
        <authorList>
            <person name="Cao L."/>
            <person name="Yu K."/>
            <person name="Banh C."/>
            <person name="Nguyen V."/>
            <person name="Ritz A."/>
            <person name="Raphael B.J."/>
            <person name="Kawakami Y."/>
            <person name="Kawakami T."/>
            <person name="Salomon A.R."/>
        </authorList>
    </citation>
    <scope>PHOSPHORYLATION [LARGE SCALE ANALYSIS] AT TYR-92 AND TYR-103</scope>
    <scope>IDENTIFICATION BY MASS SPECTROMETRY [LARGE SCALE ANALYSIS]</scope>
    <source>
        <tissue>Mast cell</tissue>
    </source>
</reference>
<reference key="20">
    <citation type="journal article" date="2008" name="Blood">
        <title>Analysis of mouse LMIR5/CLM-7 as an activating receptor: differential regulation of LMIR5/CLM-7 in mouse versus human cells.</title>
        <authorList>
            <person name="Yamanishi Y."/>
            <person name="Kitaura J."/>
            <person name="Izawa K."/>
            <person name="Matsuoka T."/>
            <person name="Oki T."/>
            <person name="Lu Y."/>
            <person name="Shibata F."/>
            <person name="Yamazaki S."/>
            <person name="Kumagai H."/>
            <person name="Nakajima H."/>
            <person name="Maeda-Yamamoto M."/>
            <person name="Tybulewicz V.L.J."/>
            <person name="Takai T."/>
            <person name="Kitamura T."/>
        </authorList>
    </citation>
    <scope>INTERACTION WITH CD300LB</scope>
</reference>
<reference key="21">
    <citation type="journal article" date="2008" name="J. Neurosci.">
        <title>Developmental neuronal death in hippocampus requires the microglial CD11b integrin and DAP12 immunoreceptor.</title>
        <authorList>
            <person name="Wakselman S."/>
            <person name="Bechade C."/>
            <person name="Roumier A."/>
            <person name="Bernard D."/>
            <person name="Triller A."/>
            <person name="Bessis A."/>
        </authorList>
    </citation>
    <scope>FUNCTION</scope>
    <scope>TISSUE SPECIFICITY</scope>
</reference>
<reference key="22">
    <citation type="journal article" date="2008" name="Mol. Cell">
        <title>DAP12 couples c-Fms activation to the osteoclast cytoskeleton by recruitment of Syk.</title>
        <authorList>
            <person name="Zou W."/>
            <person name="Reeve J.L."/>
            <person name="Liu Y."/>
            <person name="Teitelbaum S.L."/>
            <person name="Ross F.P."/>
        </authorList>
    </citation>
    <scope>FUNCTION</scope>
    <scope>PHOSPHORYLATION AT TYR-92 AND TYR-103</scope>
    <scope>DISRUPTION PHENOTYPE</scope>
    <scope>MUTAGENESIS OF ASP-52; TYR-92 AND TYR-103</scope>
</reference>
<reference key="23">
    <citation type="journal article" date="2008" name="Sci. Signal.">
        <title>Essential role of DAP12 signaling in macrophage programming into a fusion-competent state.</title>
        <authorList>
            <person name="Helming L."/>
            <person name="Tomasello E."/>
            <person name="Kyriakides T.R."/>
            <person name="Martinez F.O."/>
            <person name="Takai T."/>
            <person name="Gordon S."/>
            <person name="Vivier E."/>
        </authorList>
    </citation>
    <scope>FUNCTION</scope>
    <scope>DISRUPTION PHENOTYPE</scope>
</reference>
<reference key="24">
    <citation type="journal article" date="2009" name="Immunity">
        <title>The phagosomal proteome in interferon-gamma-activated macrophages.</title>
        <authorList>
            <person name="Trost M."/>
            <person name="English L."/>
            <person name="Lemieux S."/>
            <person name="Courcelles M."/>
            <person name="Desjardins M."/>
            <person name="Thibault P."/>
        </authorList>
    </citation>
    <scope>IDENTIFICATION BY MASS SPECTROMETRY [LARGE SCALE ANALYSIS]</scope>
</reference>
<reference key="25">
    <citation type="journal article" date="2010" name="Cell">
        <title>A tissue-specific atlas of mouse protein phosphorylation and expression.</title>
        <authorList>
            <person name="Huttlin E.L."/>
            <person name="Jedrychowski M.P."/>
            <person name="Elias J.E."/>
            <person name="Goswami T."/>
            <person name="Rad R."/>
            <person name="Beausoleil S.A."/>
            <person name="Villen J."/>
            <person name="Haas W."/>
            <person name="Sowa M.E."/>
            <person name="Gygi S.P."/>
        </authorList>
    </citation>
    <scope>IDENTIFICATION BY MASS SPECTROMETRY [LARGE SCALE ANALYSIS]</scope>
    <source>
        <tissue>Spleen</tissue>
    </source>
</reference>
<reference key="26">
    <citation type="journal article" date="2011" name="J. Exp. Med.">
        <title>The immunoreceptor adapter protein DAP12 suppresses B lymphocyte-driven adaptive immune responses.</title>
        <authorList>
            <person name="Nakano-Yokomizo T."/>
            <person name="Tahara-Hanaoka S."/>
            <person name="Nakahashi-Oda C."/>
            <person name="Nabekura T."/>
            <person name="Tchao N.K."/>
            <person name="Kadosaki M."/>
            <person name="Totsuka N."/>
            <person name="Kurita N."/>
            <person name="Nakamagoe K."/>
            <person name="Tamaoka A."/>
            <person name="Takai T."/>
            <person name="Yasui T."/>
            <person name="Kikutani H."/>
            <person name="Honda S."/>
            <person name="Shibuya K."/>
            <person name="Lanier L.L."/>
            <person name="Shibuya A."/>
        </authorList>
    </citation>
    <scope>FUNCTION</scope>
    <scope>DISRUPTION PHENOTYPE</scope>
</reference>
<reference key="27">
    <citation type="journal article" date="2011" name="J. Immunol.">
        <title>DAP12 promotes IRAK-M expression and IL-10 production by liver myeloid dendritic cells and restrains their T cell allostimulatory ability.</title>
        <authorList>
            <person name="Sumpter T.L."/>
            <person name="Packiam V."/>
            <person name="Turnquist H.R."/>
            <person name="Castellaneta A."/>
            <person name="Yoshida O."/>
            <person name="Thomson A.W."/>
        </authorList>
    </citation>
    <scope>FUNCTION</scope>
    <scope>TISSUE SPECIFICITY</scope>
    <scope>INDUCTION</scope>
</reference>
<reference key="28">
    <citation type="journal article" date="2013" name="J. Biol. Chem.">
        <title>Sequential proteolytic processing of the triggering receptor expressed on myeloid cells-2 (TREM2) protein by ectodomain shedding and gamma-secretase-dependent intramembranous cleavage.</title>
        <authorList>
            <person name="Wunderlich P."/>
            <person name="Glebov K."/>
            <person name="Kemmerling N."/>
            <person name="Tien N.T."/>
            <person name="Neumann H."/>
            <person name="Walter J."/>
        </authorList>
    </citation>
    <scope>PHOSPHORYLATION AT TYR-92 AND TYR-103</scope>
    <scope>MUTAGENESIS OF TYR-92 AND TYR-103</scope>
</reference>
<reference key="29">
    <citation type="journal article" date="2015" name="Glia">
        <title>A DAP12-dependent signal promotes pro-inflammatory polarization in microglia following nerve injury and exacerbates degeneration of injured neurons.</title>
        <authorList>
            <person name="Kobayashi M."/>
            <person name="Konishi H."/>
            <person name="Takai T."/>
            <person name="Kiyama H."/>
        </authorList>
    </citation>
    <scope>FUNCTION</scope>
    <scope>INDUCTION</scope>
    <scope>DISRUPTION PHENOTYPE</scope>
</reference>
<reference key="30">
    <citation type="journal article" date="2018" name="Neuron">
        <title>TREM2 Is a Receptor for beta-Amyloid that Mediates Microglial Function.</title>
        <authorList>
            <person name="Zhao Y."/>
            <person name="Wu X."/>
            <person name="Li X."/>
            <person name="Jiang L.L."/>
            <person name="Gui X."/>
            <person name="Liu Y."/>
            <person name="Sun Y."/>
            <person name="Zhu B."/>
            <person name="Pina-Crespo J.C."/>
            <person name="Zhang M."/>
            <person name="Zhang N."/>
            <person name="Chen X."/>
            <person name="Bu G."/>
            <person name="An Z."/>
            <person name="Huang T.Y."/>
            <person name="Xu H."/>
        </authorList>
    </citation>
    <scope>INTERACTION WITH TREM2</scope>
</reference>
<organism>
    <name type="scientific">Mus musculus</name>
    <name type="common">Mouse</name>
    <dbReference type="NCBI Taxonomy" id="10090"/>
    <lineage>
        <taxon>Eukaryota</taxon>
        <taxon>Metazoa</taxon>
        <taxon>Chordata</taxon>
        <taxon>Craniata</taxon>
        <taxon>Vertebrata</taxon>
        <taxon>Euteleostomi</taxon>
        <taxon>Mammalia</taxon>
        <taxon>Eutheria</taxon>
        <taxon>Euarchontoglires</taxon>
        <taxon>Glires</taxon>
        <taxon>Rodentia</taxon>
        <taxon>Myomorpha</taxon>
        <taxon>Muroidea</taxon>
        <taxon>Muridae</taxon>
        <taxon>Murinae</taxon>
        <taxon>Mus</taxon>
        <taxon>Mus</taxon>
    </lineage>
</organism>
<accession>O54885</accession>
<accession>O88603</accession>
<comment type="function">
    <text evidence="1 8 11 13 14 15 16 19 20 21 22 23 25 28">Adapter protein which non-covalently associates with activating receptors found on the surface of a variety of immune cells to mediate signaling and cell activation following ligand binding by the receptors (PubMed:15471863, PubMed:9647200). TYROBP is tyrosine-phosphorylated in the ITAM domain following ligand binding by the associated receptors which leads to activation of additional tyrosine kinases and subsequent cell activation (PubMed:15728241, PubMed:16715077). Also has an inhibitory role in some cells (PubMed:21727189). Non-covalently associates with activating receptors of the CD300 family to mediate cell activation (By similarity). Also mediates cell activation through association with activating receptors of the CD200R family (PubMed:15471863). Required for neutrophil activation mediated by integrin (PubMed:17086186). Required for the activation of myeloid cells mediated by the CLEC5A/MDL1 receptor (By similarity). Associates with natural killer (NK) cell receptors such as the KLRD1/KLRC2 heterodimer to mediate NK cell activation (By similarity). Also associates non-covalently with the NK cell receptors KLRA4/LY49D and KLRA8/LY49H which leads to NK cell activation (PubMed:9647200). Associates with TREM1 to mediate activation of neutrophils and monocytes (By similarity). Associates with TREM2 on monocyte-derived dendritic cells to mediate up-regulation of chemokine receptor CCR7 and dendritic cell maturation and survival (By similarity). Association with TREM2 mediates cytokine-induced formation of multinucleated giant cells which are formed by the fusion of macrophages (PubMed:18957693). Stabilizes the TREM2 C-terminal fragment (TREM2-CTF) which is produced by TREM2 ectodomain shedding (By similarity). In microglia, required with TREM2 for phagocytosis of apoptotic neurons (PubMed:15728241). Required with ITGAM/CD11B in microglia to control production of microglial superoxide ions which promote the neuronal apoptosis that occurs during brain development (PubMed:18685038). Promotes pro-inflammatory responses in microglia following nerve injury which accelerates degeneration of injured neurons (PubMed:25690660). Positively regulates the expression of the IRAK3/IRAK-M kinase and IL10 production by liver dendritic cells and inhibits their T cell allostimulatory ability (PubMed:21257958). Negatively regulates B cell proliferation (PubMed:21727189). Required for CSF1-mediated osteoclast cytoskeletal organization (PubMed:18691974). Positively regulates multinucleation during osteoclast development (PubMed:12569157, PubMed:14969392).</text>
</comment>
<comment type="subunit">
    <text evidence="1 4 5 6 7 9 10 12 15 16 17 18 26 28">Homodimer; disulfide-linked (By similarity). Homotrimer; disulfide-linked (By similarity). Homotetramer; disulfide-linked (By similarity). Homotrimers and homotetramers form when low levels of partner receptors are available and are competitive with assembly with interacting receptors (By similarity). They may represent alternative oligomerization states or may be intermediates in the receptor assembly process (By similarity). Binding of a metal cation aids in homooligomerization through coordination of the metal ion by the subunits of the oligomer (By similarity). Interacts with TREM1 (By similarity). Interacts with TREM2 (PubMed:16715077, PubMed:29518356). Interacts with TREM3 (PubMed:11754004). Interacts with CLECSF5 (PubMed:10449773). Interacts with CD300LB and CD300C2 (PubMed:12874256, PubMed:12893283, PubMed:17202337, PubMed:17928527). Interacts with CD300E (By similarity). Interacts (via ITAM domain) with SYK (via SH2 domains); activates SYK mediating neutrophil and macrophage integrin-mediated activation (PubMed:17086186). Interacts (via transmembrane domain) with KLRK1 isoform 2 (via transmembrane domain); the interaction is required for KLRK1 NK cell surface expression and NK cell-mediated cytotoxicity (PubMed:12426564, PubMed:12426565, PubMed:15294961). Interacts with KLRC2 (By similarity). Interacts with CD300H (By similarity). Interacts with KLRD1 (By similarity). Interacts with KLRA4 and KLRA8 (PubMed:9647200).</text>
</comment>
<comment type="interaction">
    <interactant intactId="EBI-15687058">
        <id>O54885</id>
    </interactant>
    <interactant intactId="EBI-15761206">
        <id>Q9R007</id>
        <label>Clec5a</label>
    </interactant>
    <organismsDiffer>false</organismsDiffer>
    <experiments>3</experiments>
</comment>
<comment type="interaction">
    <interactant intactId="EBI-15687058">
        <id>O54885</id>
    </interactant>
    <interactant intactId="EBI-15761243">
        <id>Q9QUJ0</id>
        <label>Hcst</label>
    </interactant>
    <organismsDiffer>false</organismsDiffer>
    <experiments>4</experiments>
</comment>
<comment type="subcellular location">
    <subcellularLocation>
        <location evidence="28">Cell membrane</location>
        <topology evidence="2">Single-pass type I membrane protein</topology>
    </subcellularLocation>
</comment>
<comment type="tissue specificity">
    <text evidence="8 11 19 22">Expressed on microglia (at protein level) (PubMed:12569157, PubMed:18685038). Expressed on oligodendrocytes (at protein level) (PubMed:12569157). Expressed on macrophages and osteoclasts (PubMed:14969392). Expressed on dendritic cells in liver, spleen, kidney and lung with highest levels in liver dendritic cells (PubMed:21257958).</text>
</comment>
<comment type="induction">
    <text evidence="22 25">Induced in microglia following nerve injury (at protein level) (PubMed:25690660). Induced in liver dendritic cells by physiological concentrations of lipopolysaccharide (PubMed:21257958).</text>
</comment>
<comment type="PTM">
    <text evidence="1 5 7 16 27 29">Tyrosine phosphorylated (PubMed:11754004, PubMed:12426565, PubMed:15728241, PubMed:17086186, PubMed:18691974, PubMed:9490415, PubMed:9852069). Following ligand binding by associated receptors, tyrosine phosphorylated in the ITAM domain which leads to activation of additional tyrosine kinases and subsequent cell activation (By similarity).</text>
</comment>
<comment type="disruption phenotype">
    <text evidence="8 11 20 21 23 25">Increased bone mass and failure to generate multinuclear osteoclasts in vitro (PubMed:12569157, PubMed:14969392). Thalamic hypomyelination, synaptic degeneration, reduced startle response and aberrant electrophysiological profiles (PubMed:12569157). Enhanced proliferation of B cells (PubMed:21727189). Reduced number of microglia at sites of nerve injury and high rate of neuronal survival (PubMed:25690660). Impaired macrophage fusion (PubMed:18957693). Defective osteoclast cytoskeletal organization and function (PubMed:18691974).</text>
</comment>
<comment type="similarity">
    <text evidence="32">Belongs to the TYROBP family.</text>
</comment>